<feature type="chain" id="PRO_1000165204" description="Type III pantothenate kinase">
    <location>
        <begin position="1"/>
        <end position="255"/>
    </location>
</feature>
<feature type="active site" description="Proton acceptor" evidence="1">
    <location>
        <position position="109"/>
    </location>
</feature>
<feature type="binding site" evidence="1">
    <location>
        <begin position="6"/>
        <end position="13"/>
    </location>
    <ligand>
        <name>ATP</name>
        <dbReference type="ChEBI" id="CHEBI:30616"/>
    </ligand>
</feature>
<feature type="binding site" evidence="1">
    <location>
        <position position="100"/>
    </location>
    <ligand>
        <name>substrate</name>
    </ligand>
</feature>
<feature type="binding site" evidence="1">
    <location>
        <begin position="107"/>
        <end position="110"/>
    </location>
    <ligand>
        <name>substrate</name>
    </ligand>
</feature>
<feature type="binding site" evidence="1">
    <location>
        <position position="129"/>
    </location>
    <ligand>
        <name>K(+)</name>
        <dbReference type="ChEBI" id="CHEBI:29103"/>
    </ligand>
</feature>
<feature type="binding site" evidence="1">
    <location>
        <position position="132"/>
    </location>
    <ligand>
        <name>ATP</name>
        <dbReference type="ChEBI" id="CHEBI:30616"/>
    </ligand>
</feature>
<feature type="binding site" evidence="1">
    <location>
        <position position="184"/>
    </location>
    <ligand>
        <name>substrate</name>
    </ligand>
</feature>
<keyword id="KW-0067">ATP-binding</keyword>
<keyword id="KW-0173">Coenzyme A biosynthesis</keyword>
<keyword id="KW-0963">Cytoplasm</keyword>
<keyword id="KW-0418">Kinase</keyword>
<keyword id="KW-0479">Metal-binding</keyword>
<keyword id="KW-0547">Nucleotide-binding</keyword>
<keyword id="KW-0630">Potassium</keyword>
<keyword id="KW-1185">Reference proteome</keyword>
<keyword id="KW-0808">Transferase</keyword>
<gene>
    <name evidence="1" type="primary">coaX</name>
    <name type="ordered locus">PERMA_0451</name>
</gene>
<comment type="function">
    <text evidence="1">Catalyzes the phosphorylation of pantothenate (Pan), the first step in CoA biosynthesis.</text>
</comment>
<comment type="catalytic activity">
    <reaction evidence="1">
        <text>(R)-pantothenate + ATP = (R)-4'-phosphopantothenate + ADP + H(+)</text>
        <dbReference type="Rhea" id="RHEA:16373"/>
        <dbReference type="ChEBI" id="CHEBI:10986"/>
        <dbReference type="ChEBI" id="CHEBI:15378"/>
        <dbReference type="ChEBI" id="CHEBI:29032"/>
        <dbReference type="ChEBI" id="CHEBI:30616"/>
        <dbReference type="ChEBI" id="CHEBI:456216"/>
        <dbReference type="EC" id="2.7.1.33"/>
    </reaction>
</comment>
<comment type="cofactor">
    <cofactor evidence="1">
        <name>NH4(+)</name>
        <dbReference type="ChEBI" id="CHEBI:28938"/>
    </cofactor>
    <cofactor evidence="1">
        <name>K(+)</name>
        <dbReference type="ChEBI" id="CHEBI:29103"/>
    </cofactor>
    <text evidence="1">A monovalent cation. Ammonium or potassium.</text>
</comment>
<comment type="pathway">
    <text evidence="1">Cofactor biosynthesis; coenzyme A biosynthesis; CoA from (R)-pantothenate: step 1/5.</text>
</comment>
<comment type="subunit">
    <text evidence="1">Homodimer.</text>
</comment>
<comment type="subcellular location">
    <subcellularLocation>
        <location evidence="1">Cytoplasm</location>
    </subcellularLocation>
</comment>
<comment type="similarity">
    <text evidence="1">Belongs to the type III pantothenate kinase family.</text>
</comment>
<accession>C0QU76</accession>
<sequence length="255" mass="28255">MILGIDIGNTTSEFGFIYNGKRINSYKLRSDHTKTVDDWLIDISAIFSIEGMKKESVKDCVISSVVPPLEDRIYSACKKFLGKKPLRIGKELKVPIKINYKNPEEVGIDRVVNAFAGVKRYGKPLILVDLGTAITFDVVNQKGEYEGGAIFPGIDSSIEALFSKTAKLPKVSIENVKKVVGKTTVESIQSGIFFGYISLIEGMIKRIIREKGFSPKVILTGGSGEIITKGLEIDHIFDMYLSLEGIYDIYSYHGN</sequence>
<name>COAX_PERMH</name>
<organism>
    <name type="scientific">Persephonella marina (strain DSM 14350 / EX-H1)</name>
    <dbReference type="NCBI Taxonomy" id="123214"/>
    <lineage>
        <taxon>Bacteria</taxon>
        <taxon>Pseudomonadati</taxon>
        <taxon>Aquificota</taxon>
        <taxon>Aquificia</taxon>
        <taxon>Aquificales</taxon>
        <taxon>Hydrogenothermaceae</taxon>
        <taxon>Persephonella</taxon>
    </lineage>
</organism>
<dbReference type="EC" id="2.7.1.33" evidence="1"/>
<dbReference type="EMBL" id="CP001230">
    <property type="protein sequence ID" value="ACO04184.1"/>
    <property type="molecule type" value="Genomic_DNA"/>
</dbReference>
<dbReference type="RefSeq" id="WP_012676422.1">
    <property type="nucleotide sequence ID" value="NC_012440.1"/>
</dbReference>
<dbReference type="SMR" id="C0QU76"/>
<dbReference type="STRING" id="123214.PERMA_0451"/>
<dbReference type="PaxDb" id="123214-PERMA_0451"/>
<dbReference type="KEGG" id="pmx:PERMA_0451"/>
<dbReference type="eggNOG" id="COG1521">
    <property type="taxonomic scope" value="Bacteria"/>
</dbReference>
<dbReference type="HOGENOM" id="CLU_066627_1_0_0"/>
<dbReference type="OrthoDB" id="9804707at2"/>
<dbReference type="UniPathway" id="UPA00241">
    <property type="reaction ID" value="UER00352"/>
</dbReference>
<dbReference type="Proteomes" id="UP000001366">
    <property type="component" value="Chromosome"/>
</dbReference>
<dbReference type="GO" id="GO:0005737">
    <property type="term" value="C:cytoplasm"/>
    <property type="evidence" value="ECO:0007669"/>
    <property type="project" value="UniProtKB-SubCell"/>
</dbReference>
<dbReference type="GO" id="GO:0005524">
    <property type="term" value="F:ATP binding"/>
    <property type="evidence" value="ECO:0007669"/>
    <property type="project" value="UniProtKB-UniRule"/>
</dbReference>
<dbReference type="GO" id="GO:0046872">
    <property type="term" value="F:metal ion binding"/>
    <property type="evidence" value="ECO:0007669"/>
    <property type="project" value="UniProtKB-KW"/>
</dbReference>
<dbReference type="GO" id="GO:0004594">
    <property type="term" value="F:pantothenate kinase activity"/>
    <property type="evidence" value="ECO:0007669"/>
    <property type="project" value="UniProtKB-UniRule"/>
</dbReference>
<dbReference type="GO" id="GO:0015937">
    <property type="term" value="P:coenzyme A biosynthetic process"/>
    <property type="evidence" value="ECO:0007669"/>
    <property type="project" value="UniProtKB-UniRule"/>
</dbReference>
<dbReference type="CDD" id="cd24015">
    <property type="entry name" value="ASKHA_NBD_PanK-III"/>
    <property type="match status" value="1"/>
</dbReference>
<dbReference type="Gene3D" id="3.30.420.40">
    <property type="match status" value="2"/>
</dbReference>
<dbReference type="HAMAP" id="MF_01274">
    <property type="entry name" value="Pantothen_kinase_3"/>
    <property type="match status" value="1"/>
</dbReference>
<dbReference type="InterPro" id="IPR043129">
    <property type="entry name" value="ATPase_NBD"/>
</dbReference>
<dbReference type="InterPro" id="IPR004619">
    <property type="entry name" value="Type_III_PanK"/>
</dbReference>
<dbReference type="NCBIfam" id="TIGR00671">
    <property type="entry name" value="baf"/>
    <property type="match status" value="1"/>
</dbReference>
<dbReference type="NCBIfam" id="NF009848">
    <property type="entry name" value="PRK13318.1-6"/>
    <property type="match status" value="1"/>
</dbReference>
<dbReference type="NCBIfam" id="NF009855">
    <property type="entry name" value="PRK13321.1"/>
    <property type="match status" value="1"/>
</dbReference>
<dbReference type="PANTHER" id="PTHR34265">
    <property type="entry name" value="TYPE III PANTOTHENATE KINASE"/>
    <property type="match status" value="1"/>
</dbReference>
<dbReference type="PANTHER" id="PTHR34265:SF1">
    <property type="entry name" value="TYPE III PANTOTHENATE KINASE"/>
    <property type="match status" value="1"/>
</dbReference>
<dbReference type="Pfam" id="PF03309">
    <property type="entry name" value="Pan_kinase"/>
    <property type="match status" value="1"/>
</dbReference>
<dbReference type="SUPFAM" id="SSF53067">
    <property type="entry name" value="Actin-like ATPase domain"/>
    <property type="match status" value="2"/>
</dbReference>
<proteinExistence type="inferred from homology"/>
<reference key="1">
    <citation type="journal article" date="2009" name="J. Bacteriol.">
        <title>Complete and draft genome sequences of six members of the Aquificales.</title>
        <authorList>
            <person name="Reysenbach A.-L."/>
            <person name="Hamamura N."/>
            <person name="Podar M."/>
            <person name="Griffiths E."/>
            <person name="Ferreira S."/>
            <person name="Hochstein R."/>
            <person name="Heidelberg J."/>
            <person name="Johnson J."/>
            <person name="Mead D."/>
            <person name="Pohorille A."/>
            <person name="Sarmiento M."/>
            <person name="Schweighofer K."/>
            <person name="Seshadri R."/>
            <person name="Voytek M.A."/>
        </authorList>
    </citation>
    <scope>NUCLEOTIDE SEQUENCE [LARGE SCALE GENOMIC DNA]</scope>
    <source>
        <strain>DSM 14350 / EX-H1</strain>
    </source>
</reference>
<protein>
    <recommendedName>
        <fullName evidence="1">Type III pantothenate kinase</fullName>
        <ecNumber evidence="1">2.7.1.33</ecNumber>
    </recommendedName>
    <alternativeName>
        <fullName evidence="1">PanK-III</fullName>
    </alternativeName>
    <alternativeName>
        <fullName evidence="1">Pantothenic acid kinase</fullName>
    </alternativeName>
</protein>
<evidence type="ECO:0000255" key="1">
    <source>
        <dbReference type="HAMAP-Rule" id="MF_01274"/>
    </source>
</evidence>